<comment type="function">
    <text evidence="1">Specifically methylates the uridine in position 2552 of 23S rRNA at the 2'-O position of the ribose in the fully assembled 50S ribosomal subunit.</text>
</comment>
<comment type="catalytic activity">
    <reaction evidence="1">
        <text>uridine(2552) in 23S rRNA + S-adenosyl-L-methionine = 2'-O-methyluridine(2552) in 23S rRNA + S-adenosyl-L-homocysteine + H(+)</text>
        <dbReference type="Rhea" id="RHEA:42720"/>
        <dbReference type="Rhea" id="RHEA-COMP:10202"/>
        <dbReference type="Rhea" id="RHEA-COMP:10203"/>
        <dbReference type="ChEBI" id="CHEBI:15378"/>
        <dbReference type="ChEBI" id="CHEBI:57856"/>
        <dbReference type="ChEBI" id="CHEBI:59789"/>
        <dbReference type="ChEBI" id="CHEBI:65315"/>
        <dbReference type="ChEBI" id="CHEBI:74478"/>
        <dbReference type="EC" id="2.1.1.166"/>
    </reaction>
</comment>
<comment type="subcellular location">
    <subcellularLocation>
        <location evidence="1">Cytoplasm</location>
    </subcellularLocation>
</comment>
<comment type="similarity">
    <text evidence="1">Belongs to the class I-like SAM-binding methyltransferase superfamily. RNA methyltransferase RlmE family.</text>
</comment>
<feature type="chain" id="PRO_1000195018" description="Ribosomal RNA large subunit methyltransferase E">
    <location>
        <begin position="1"/>
        <end position="208"/>
    </location>
</feature>
<feature type="active site" description="Proton acceptor" evidence="1">
    <location>
        <position position="164"/>
    </location>
</feature>
<feature type="binding site" evidence="1">
    <location>
        <position position="63"/>
    </location>
    <ligand>
        <name>S-adenosyl-L-methionine</name>
        <dbReference type="ChEBI" id="CHEBI:59789"/>
    </ligand>
</feature>
<feature type="binding site" evidence="1">
    <location>
        <position position="65"/>
    </location>
    <ligand>
        <name>S-adenosyl-L-methionine</name>
        <dbReference type="ChEBI" id="CHEBI:59789"/>
    </ligand>
</feature>
<feature type="binding site" evidence="1">
    <location>
        <position position="83"/>
    </location>
    <ligand>
        <name>S-adenosyl-L-methionine</name>
        <dbReference type="ChEBI" id="CHEBI:59789"/>
    </ligand>
</feature>
<feature type="binding site" evidence="1">
    <location>
        <position position="99"/>
    </location>
    <ligand>
        <name>S-adenosyl-L-methionine</name>
        <dbReference type="ChEBI" id="CHEBI:59789"/>
    </ligand>
</feature>
<feature type="binding site" evidence="1">
    <location>
        <position position="124"/>
    </location>
    <ligand>
        <name>S-adenosyl-L-methionine</name>
        <dbReference type="ChEBI" id="CHEBI:59789"/>
    </ligand>
</feature>
<accession>B5BGK3</accession>
<evidence type="ECO:0000255" key="1">
    <source>
        <dbReference type="HAMAP-Rule" id="MF_01547"/>
    </source>
</evidence>
<proteinExistence type="inferred from homology"/>
<organism>
    <name type="scientific">Salmonella paratyphi A (strain AKU_12601)</name>
    <dbReference type="NCBI Taxonomy" id="554290"/>
    <lineage>
        <taxon>Bacteria</taxon>
        <taxon>Pseudomonadati</taxon>
        <taxon>Pseudomonadota</taxon>
        <taxon>Gammaproteobacteria</taxon>
        <taxon>Enterobacterales</taxon>
        <taxon>Enterobacteriaceae</taxon>
        <taxon>Salmonella</taxon>
    </lineage>
</organism>
<protein>
    <recommendedName>
        <fullName evidence="1">Ribosomal RNA large subunit methyltransferase E</fullName>
        <ecNumber evidence="1">2.1.1.166</ecNumber>
    </recommendedName>
    <alternativeName>
        <fullName evidence="1">23S rRNA Um2552 methyltransferase</fullName>
    </alternativeName>
    <alternativeName>
        <fullName evidence="1">rRNA (uridine-2'-O-)-methyltransferase</fullName>
    </alternativeName>
</protein>
<keyword id="KW-0963">Cytoplasm</keyword>
<keyword id="KW-0489">Methyltransferase</keyword>
<keyword id="KW-0698">rRNA processing</keyword>
<keyword id="KW-0949">S-adenosyl-L-methionine</keyword>
<keyword id="KW-0808">Transferase</keyword>
<dbReference type="EC" id="2.1.1.166" evidence="1"/>
<dbReference type="EMBL" id="FM200053">
    <property type="protein sequence ID" value="CAR61201.1"/>
    <property type="molecule type" value="Genomic_DNA"/>
</dbReference>
<dbReference type="RefSeq" id="WP_000145973.1">
    <property type="nucleotide sequence ID" value="NC_011147.1"/>
</dbReference>
<dbReference type="SMR" id="B5BGK3"/>
<dbReference type="KEGG" id="sek:SSPA2952"/>
<dbReference type="HOGENOM" id="CLU_009422_4_0_6"/>
<dbReference type="Proteomes" id="UP000001869">
    <property type="component" value="Chromosome"/>
</dbReference>
<dbReference type="GO" id="GO:0005737">
    <property type="term" value="C:cytoplasm"/>
    <property type="evidence" value="ECO:0007669"/>
    <property type="project" value="UniProtKB-SubCell"/>
</dbReference>
<dbReference type="GO" id="GO:0008650">
    <property type="term" value="F:rRNA (uridine-2'-O-)-methyltransferase activity"/>
    <property type="evidence" value="ECO:0007669"/>
    <property type="project" value="UniProtKB-UniRule"/>
</dbReference>
<dbReference type="CDD" id="cd02440">
    <property type="entry name" value="AdoMet_MTases"/>
    <property type="match status" value="1"/>
</dbReference>
<dbReference type="FunFam" id="3.40.50.150:FF:000005">
    <property type="entry name" value="Ribosomal RNA large subunit methyltransferase E"/>
    <property type="match status" value="1"/>
</dbReference>
<dbReference type="Gene3D" id="3.40.50.150">
    <property type="entry name" value="Vaccinia Virus protein VP39"/>
    <property type="match status" value="1"/>
</dbReference>
<dbReference type="HAMAP" id="MF_01547">
    <property type="entry name" value="RNA_methyltr_E"/>
    <property type="match status" value="1"/>
</dbReference>
<dbReference type="InterPro" id="IPR050082">
    <property type="entry name" value="RNA_methyltr_RlmE"/>
</dbReference>
<dbReference type="InterPro" id="IPR002877">
    <property type="entry name" value="RNA_MeTrfase_FtsJ_dom"/>
</dbReference>
<dbReference type="InterPro" id="IPR015507">
    <property type="entry name" value="rRNA-MeTfrase_E"/>
</dbReference>
<dbReference type="InterPro" id="IPR004512">
    <property type="entry name" value="rRNA_MeTrfase_gammaproteobac"/>
</dbReference>
<dbReference type="InterPro" id="IPR029063">
    <property type="entry name" value="SAM-dependent_MTases_sf"/>
</dbReference>
<dbReference type="NCBIfam" id="NF008390">
    <property type="entry name" value="PRK11188.1"/>
    <property type="match status" value="1"/>
</dbReference>
<dbReference type="NCBIfam" id="TIGR00438">
    <property type="entry name" value="rrmJ"/>
    <property type="match status" value="1"/>
</dbReference>
<dbReference type="PANTHER" id="PTHR10920">
    <property type="entry name" value="RIBOSOMAL RNA METHYLTRANSFERASE"/>
    <property type="match status" value="1"/>
</dbReference>
<dbReference type="PANTHER" id="PTHR10920:SF18">
    <property type="entry name" value="RRNA METHYLTRANSFERASE 2, MITOCHONDRIAL"/>
    <property type="match status" value="1"/>
</dbReference>
<dbReference type="Pfam" id="PF01728">
    <property type="entry name" value="FtsJ"/>
    <property type="match status" value="1"/>
</dbReference>
<dbReference type="PIRSF" id="PIRSF005461">
    <property type="entry name" value="23S_rRNA_mtase"/>
    <property type="match status" value="1"/>
</dbReference>
<dbReference type="SUPFAM" id="SSF53335">
    <property type="entry name" value="S-adenosyl-L-methionine-dependent methyltransferases"/>
    <property type="match status" value="1"/>
</dbReference>
<name>RLME_SALPK</name>
<sequence>MTGKKRSASSSRWLQEHFSDKYVQQAQKKGLRSRAWFKLDEIQQSDKLFKPGMTVVDLGAAPGGWSQYVVTQIGGKGRIIACDLLPMDPIVGVDFLQGDFRDELVMKALLERVGDSKVQVVMSDMAPNMSGTPAVDIPRAMYLVELALEMCRDVLAPGGSFVVKVFQGEGFDEYLREIRSLFTKVKIRKPDSSRARSREVYIVATGRK</sequence>
<reference key="1">
    <citation type="journal article" date="2009" name="BMC Genomics">
        <title>Pseudogene accumulation in the evolutionary histories of Salmonella enterica serovars Paratyphi A and Typhi.</title>
        <authorList>
            <person name="Holt K.E."/>
            <person name="Thomson N.R."/>
            <person name="Wain J."/>
            <person name="Langridge G.C."/>
            <person name="Hasan R."/>
            <person name="Bhutta Z.A."/>
            <person name="Quail M.A."/>
            <person name="Norbertczak H."/>
            <person name="Walker D."/>
            <person name="Simmonds M."/>
            <person name="White B."/>
            <person name="Bason N."/>
            <person name="Mungall K."/>
            <person name="Dougan G."/>
            <person name="Parkhill J."/>
        </authorList>
    </citation>
    <scope>NUCLEOTIDE SEQUENCE [LARGE SCALE GENOMIC DNA]</scope>
    <source>
        <strain>AKU_12601</strain>
    </source>
</reference>
<gene>
    <name evidence="1" type="primary">rlmE</name>
    <name evidence="1" type="synonym">ftsJ</name>
    <name evidence="1" type="synonym">rrmJ</name>
    <name type="ordered locus">SSPA2952</name>
</gene>